<organism>
    <name type="scientific">Rattus norvegicus</name>
    <name type="common">Rat</name>
    <dbReference type="NCBI Taxonomy" id="10116"/>
    <lineage>
        <taxon>Eukaryota</taxon>
        <taxon>Metazoa</taxon>
        <taxon>Chordata</taxon>
        <taxon>Craniata</taxon>
        <taxon>Vertebrata</taxon>
        <taxon>Euteleostomi</taxon>
        <taxon>Mammalia</taxon>
        <taxon>Eutheria</taxon>
        <taxon>Euarchontoglires</taxon>
        <taxon>Glires</taxon>
        <taxon>Rodentia</taxon>
        <taxon>Myomorpha</taxon>
        <taxon>Muroidea</taxon>
        <taxon>Muridae</taxon>
        <taxon>Murinae</taxon>
        <taxon>Rattus</taxon>
    </lineage>
</organism>
<protein>
    <recommendedName>
        <fullName>General transcription factor II-I</fullName>
        <shortName>GTFII-I</shortName>
        <shortName>TFII-I</shortName>
    </recommendedName>
</protein>
<evidence type="ECO:0000250" key="1"/>
<evidence type="ECO:0000250" key="2">
    <source>
        <dbReference type="UniProtKB" id="P78347"/>
    </source>
</evidence>
<evidence type="ECO:0000250" key="3">
    <source>
        <dbReference type="UniProtKB" id="Q9ESZ8"/>
    </source>
</evidence>
<evidence type="ECO:0000255" key="4"/>
<evidence type="ECO:0000255" key="5">
    <source>
        <dbReference type="PROSITE-ProRule" id="PRU00484"/>
    </source>
</evidence>
<evidence type="ECO:0000256" key="6">
    <source>
        <dbReference type="SAM" id="MobiDB-lite"/>
    </source>
</evidence>
<evidence type="ECO:0000303" key="7">
    <source>
    </source>
</evidence>
<evidence type="ECO:0000305" key="8"/>
<evidence type="ECO:0007744" key="9">
    <source>
    </source>
</evidence>
<gene>
    <name type="primary">Gtf2i</name>
</gene>
<feature type="initiator methionine" description="Removed" evidence="2">
    <location>
        <position position="1"/>
    </location>
</feature>
<feature type="chain" id="PRO_0000343749" description="General transcription factor II-I">
    <location>
        <begin position="2"/>
        <end position="979"/>
    </location>
</feature>
<feature type="repeat" description="GTF2I-like 1">
    <location>
        <begin position="103"/>
        <end position="197"/>
    </location>
</feature>
<feature type="repeat" description="GTF2I-like 2">
    <location>
        <begin position="333"/>
        <end position="427"/>
    </location>
</feature>
<feature type="repeat" description="GTF2I-like 3">
    <location>
        <begin position="438"/>
        <end position="532"/>
    </location>
</feature>
<feature type="repeat" description="GTF2I-like 4">
    <location>
        <begin position="543"/>
        <end position="637"/>
    </location>
</feature>
<feature type="repeat" description="GTF2I-like 5">
    <location>
        <begin position="705"/>
        <end position="799"/>
    </location>
</feature>
<feature type="repeat" description="GTF2I-like 6">
    <location>
        <begin position="840"/>
        <end position="934"/>
    </location>
</feature>
<feature type="region of interest" description="Disordered" evidence="6">
    <location>
        <begin position="205"/>
        <end position="231"/>
    </location>
</feature>
<feature type="region of interest" description="Disordered" evidence="6">
    <location>
        <begin position="250"/>
        <end position="325"/>
    </location>
</feature>
<feature type="region of interest" description="Disordered" evidence="6">
    <location>
        <begin position="642"/>
        <end position="695"/>
    </location>
</feature>
<feature type="region of interest" description="Disordered" evidence="6">
    <location>
        <begin position="797"/>
        <end position="818"/>
    </location>
</feature>
<feature type="region of interest" description="Disordered" evidence="6">
    <location>
        <begin position="940"/>
        <end position="979"/>
    </location>
</feature>
<feature type="short sequence motif" description="Nuclear localization signal" evidence="4">
    <location>
        <begin position="300"/>
        <end position="307"/>
    </location>
</feature>
<feature type="compositionally biased region" description="Acidic residues" evidence="6">
    <location>
        <begin position="283"/>
        <end position="298"/>
    </location>
</feature>
<feature type="compositionally biased region" description="Pro residues" evidence="6">
    <location>
        <begin position="308"/>
        <end position="318"/>
    </location>
</feature>
<feature type="compositionally biased region" description="Polar residues" evidence="6">
    <location>
        <begin position="671"/>
        <end position="692"/>
    </location>
</feature>
<feature type="modified residue" description="N-acetylalanine" evidence="2">
    <location>
        <position position="2"/>
    </location>
</feature>
<feature type="modified residue" description="Phosphoserine" evidence="2">
    <location>
        <position position="19"/>
    </location>
</feature>
<feature type="modified residue" description="Phosphoserine" evidence="2">
    <location>
        <position position="103"/>
    </location>
</feature>
<feature type="modified residue" description="N6-acetyllysine; alternate" evidence="3">
    <location>
        <position position="130"/>
    </location>
</feature>
<feature type="modified residue" description="Phosphoserine" evidence="2">
    <location>
        <position position="210"/>
    </location>
</feature>
<feature type="modified residue" description="Phosphoserine" evidence="2">
    <location>
        <position position="214"/>
    </location>
</feature>
<feature type="modified residue" description="Phosphotyrosine; by BTK" evidence="2">
    <location>
        <position position="248"/>
    </location>
</feature>
<feature type="modified residue" description="N6-acetyllysine; alternate" evidence="3">
    <location>
        <position position="334"/>
    </location>
</feature>
<feature type="modified residue" description="Phosphotyrosine; by BTK" evidence="2">
    <location>
        <position position="379"/>
    </location>
</feature>
<feature type="modified residue" description="Phosphoserine; by PKG/PRKG1" evidence="2">
    <location>
        <position position="393"/>
    </location>
</feature>
<feature type="modified residue" description="N6-acetyllysine; alternate" evidence="3">
    <location>
        <position position="431"/>
    </location>
</feature>
<feature type="modified residue" description="Phosphotyrosine; by BTK" evidence="2">
    <location>
        <position position="484"/>
    </location>
</feature>
<feature type="modified residue" description="Phosphoserine" evidence="2">
    <location>
        <position position="498"/>
    </location>
</feature>
<feature type="modified residue" description="Phosphothreonine" evidence="3">
    <location>
        <position position="537"/>
    </location>
</feature>
<feature type="modified residue" description="Phosphothreonine" evidence="2">
    <location>
        <position position="539"/>
    </location>
</feature>
<feature type="modified residue" description="Phosphoserine" evidence="2">
    <location>
        <position position="649"/>
    </location>
</feature>
<feature type="modified residue" description="Phosphoserine" evidence="2">
    <location>
        <position position="655"/>
    </location>
</feature>
<feature type="modified residue" description="N6-acetyllysine; alternate" evidence="3">
    <location>
        <position position="696"/>
    </location>
</feature>
<feature type="modified residue" description="Phosphoserine" evidence="2">
    <location>
        <position position="703"/>
    </location>
</feature>
<feature type="modified residue" description="Phosphoserine; by PKG/PRKG1" evidence="2">
    <location>
        <position position="765"/>
    </location>
</feature>
<feature type="modified residue" description="Phosphoserine" evidence="2">
    <location>
        <position position="804"/>
    </location>
</feature>
<feature type="cross-link" description="Glycyl lysine isopeptide (Lys-Gly) (interchain with G-Cter in SUMO2)" evidence="2">
    <location>
        <position position="35"/>
    </location>
</feature>
<feature type="cross-link" description="Glycyl lysine isopeptide (Lys-Gly) (interchain with G-Cter in SUMO2)" evidence="2">
    <location>
        <position position="86"/>
    </location>
</feature>
<feature type="cross-link" description="Glycyl lysine isopeptide (Lys-Gly) (interchain with G-Cter in SUMO2)" evidence="2">
    <location>
        <position position="92"/>
    </location>
</feature>
<feature type="cross-link" description="Glycyl lysine isopeptide (Lys-Gly) (interchain with G-Cter in SUMO2)" evidence="2">
    <location>
        <position position="94"/>
    </location>
</feature>
<feature type="cross-link" description="Glycyl lysine isopeptide (Lys-Gly) (interchain with G-Cter in SUMO2); alternate" evidence="2">
    <location>
        <position position="130"/>
    </location>
</feature>
<feature type="cross-link" description="Glycyl lysine isopeptide (Lys-Gly) (interchain with G-Cter in SUMO2)" evidence="2">
    <location>
        <position position="140"/>
    </location>
</feature>
<feature type="cross-link" description="Glycyl lysine isopeptide (Lys-Gly) (interchain with G-Cter in SUMO2)" evidence="2">
    <location>
        <position position="185"/>
    </location>
</feature>
<feature type="cross-link" description="Glycyl lysine isopeptide (Lys-Gly) (interchain with G-Cter in SUMO2)" evidence="2">
    <location>
        <position position="219"/>
    </location>
</feature>
<feature type="cross-link" description="Glycyl lysine isopeptide (Lys-Gly) (interchain with G-Cter in SUMO1); alternate" evidence="2">
    <location>
        <position position="221"/>
    </location>
</feature>
<feature type="cross-link" description="Glycyl lysine isopeptide (Lys-Gly) (interchain with G-Cter in SUMO2); alternate" evidence="2">
    <location>
        <position position="221"/>
    </location>
</feature>
<feature type="cross-link" description="Glycyl lysine isopeptide (Lys-Gly) (interchain with G-Cter in SUMO2)" evidence="2">
    <location>
        <position position="306"/>
    </location>
</feature>
<feature type="cross-link" description="Glycyl lysine isopeptide (Lys-Gly) (interchain with G-Cter in SUMO2)" evidence="2">
    <location>
        <position position="324"/>
    </location>
</feature>
<feature type="cross-link" description="Glycyl lysine isopeptide (Lys-Gly) (interchain with G-Cter in SUMO2); alternate" evidence="2">
    <location>
        <position position="334"/>
    </location>
</feature>
<feature type="cross-link" description="Glycyl lysine isopeptide (Lys-Gly) (interchain with G-Cter in SUMO2)" evidence="2">
    <location>
        <position position="361"/>
    </location>
</feature>
<feature type="cross-link" description="Glycyl lysine isopeptide (Lys-Gly) (interchain with G-Cter in SUMO2)" evidence="2">
    <location>
        <position position="416"/>
    </location>
</feature>
<feature type="cross-link" description="Glycyl lysine isopeptide (Lys-Gly) (interchain with G-Cter in SUMO2); alternate" evidence="2">
    <location>
        <position position="431"/>
    </location>
</feature>
<feature type="cross-link" description="Glycyl lysine isopeptide (Lys-Gly) (interchain with G-Cter in SUMO2)" evidence="2">
    <location>
        <position position="437"/>
    </location>
</feature>
<feature type="cross-link" description="Glycyl lysine isopeptide (Lys-Gly) (interchain with G-Cter in SUMO2)" evidence="2">
    <location>
        <position position="469"/>
    </location>
</feature>
<feature type="cross-link" description="Glycyl lysine isopeptide (Lys-Gly) (interchain with G-Cter in SUMO2)" evidence="2">
    <location>
        <position position="475"/>
    </location>
</feature>
<feature type="cross-link" description="Glycyl lysine isopeptide (Lys-Gly) (interchain with G-Cter in SUMO2)" evidence="2">
    <location>
        <position position="507"/>
    </location>
</feature>
<feature type="cross-link" description="Glycyl lysine isopeptide (Lys-Gly) (interchain with G-Cter in SUMO2)" evidence="2">
    <location>
        <position position="542"/>
    </location>
</feature>
<feature type="cross-link" description="Glycyl lysine isopeptide (Lys-Gly) (interchain with G-Cter in SUMO2)" evidence="2">
    <location>
        <position position="641"/>
    </location>
</feature>
<feature type="cross-link" description="Glycyl lysine isopeptide (Lys-Gly) (interchain with G-Cter in SUMO2)" evidence="2">
    <location>
        <position position="645"/>
    </location>
</feature>
<feature type="cross-link" description="Glycyl lysine isopeptide (Lys-Gly) (interchain with G-Cter in SUMO2)" evidence="2">
    <location>
        <position position="651"/>
    </location>
</feature>
<feature type="cross-link" description="Glycyl lysine isopeptide (Lys-Gly) (interchain with G-Cter in SUMO2)" evidence="2">
    <location>
        <position position="661"/>
    </location>
</feature>
<feature type="cross-link" description="Glycyl lysine isopeptide (Lys-Gly) (interchain with G-Cter in SUMO2); alternate" evidence="2">
    <location>
        <position position="696"/>
    </location>
</feature>
<feature type="cross-link" description="Glycyl lysine isopeptide (Lys-Gly) (interchain with G-Cter in SUMO2)" evidence="2">
    <location>
        <position position="797"/>
    </location>
</feature>
<feature type="cross-link" description="Glycyl lysine isopeptide (Lys-Gly) (interchain with G-Cter in SUMO2)" evidence="2">
    <location>
        <position position="808"/>
    </location>
</feature>
<feature type="cross-link" description="Glycyl lysine isopeptide (Lys-Gly) (interchain with G-Cter in SUMO2)" evidence="2">
    <location>
        <position position="842"/>
    </location>
</feature>
<feature type="cross-link" description="Glycyl lysine isopeptide (Lys-Gly) (interchain with G-Cter in SUMO2)" evidence="2">
    <location>
        <position position="845"/>
    </location>
</feature>
<feature type="cross-link" description="Glycyl lysine isopeptide (Lys-Gly) (interchain with G-Cter in SUMO2)" evidence="2">
    <location>
        <position position="860"/>
    </location>
</feature>
<feature type="cross-link" description="Glycyl lysine isopeptide (Lys-Gly) (interchain with G-Cter in SUMO2)" evidence="2">
    <location>
        <position position="872"/>
    </location>
</feature>
<feature type="cross-link" description="Glycyl lysine isopeptide (Lys-Gly) (interchain with G-Cter in SUMO1); alternate" evidence="2">
    <location>
        <position position="972"/>
    </location>
</feature>
<feature type="cross-link" description="Glycyl lysine isopeptide (Lys-Gly) (interchain with G-Cter in SUMO2); alternate" evidence="2">
    <location>
        <position position="972"/>
    </location>
</feature>
<feature type="splice variant" id="VSP_034698" description="In isoform 2." evidence="7">
    <location>
        <begin position="229"/>
        <end position="294"/>
    </location>
</feature>
<feature type="modified residue" description="Phosphoserine" evidence="9">
    <location sequence="Q5U2Y1-2">
        <position position="228"/>
    </location>
</feature>
<sequence length="979" mass="110215">MAQVAMSALPAEDEESSESRMVVTFLMSALESMCKELAKSKAEVACIAVYETDVFVVGTERGRAFVNTRKDFQKDFVKYCVEEEEKAAEMHKMKCTTQANRMSVDAVEIETLRKTVEDYFCFCYGKALGKSTVVPVPYEKMLRDQSAVAVQGLPEGVAFKHPEHYDLATLKWILENKAGISFIIKRPFLEPKKHLGGRVMAADADRPMLSPGGSCGPIKVKTEPTEDSGISLEMAAVTVKEESEDPDYYQYNIQGSHHSSEGNEGAEVEVPAEDSTQHVPSETSEDPEVEVTIEDDDYSPPTKRPKSSEPPPPPPVPEPTNAGKRKVREFNFEKWNARITDLRKQVEELFERKYAQAIKAKGPVTIPYPLFQSHVEDLYVEGLPEGIPFRRPSTYGIPRLERILLAKERIRFVIKKHELLNSTREDLQLDKPASGVKEEWYARITKLRKMVDQLFCKKFAEALGSTEAKAVPYQKFEAYPNDLYVEGLPENIPFRSPSWYGIPRLEKIIQVGNRIKFVIKRPELLTHSTTEVTQPRTNTPVKEDWNVRITKLRKQVEEIFNLKFAQALGLTEAVKVPYPVFESNPEFLYVEGLPEGIPFRSPTWFGIPRLERIVRGSNKIKFVVKKPELVVSYLPPGMASKINTKALQSPKRPRSPGSNSKVPEIEVTVEGPNNNSPQTSTVRTPTQTNGSNVPFKPRGREFSFEAWNAKITDLKQKVENLFNEKCGEALGLKQAVKVPFALFESFPEDFYVEGLPEGVPFRRPSTFGIPRLEKILRNKAKIKFIIKKPEMFETAIKESTSSKSPPRKTNSSPSVNTTASGVEDLNIIQVTIPDDDNERLSKVEKARQLREQVNDLFSRKFGEAIGMGFPVKVPYRKITINPGCVVVDGMPPGVSFKAPSYLEISSMRRILDSAEFIKFTVIRPFPGLVINNQLVDQNESEGPVIQESAEASQLEVPATEEIKETDGSSQIKQEPDPTW</sequence>
<proteinExistence type="evidence at protein level"/>
<name>GTF2I_RAT</name>
<dbReference type="EMBL" id="AF547390">
    <property type="protein sequence ID" value="AAO32678.1"/>
    <property type="molecule type" value="mRNA"/>
</dbReference>
<dbReference type="EMBL" id="AF547391">
    <property type="protein sequence ID" value="AAO32679.1"/>
    <property type="molecule type" value="mRNA"/>
</dbReference>
<dbReference type="EMBL" id="BC085815">
    <property type="protein sequence ID" value="AAH85815.1"/>
    <property type="molecule type" value="mRNA"/>
</dbReference>
<dbReference type="RefSeq" id="NP_001001512.2">
    <molecule id="Q5U2Y1-2"/>
    <property type="nucleotide sequence ID" value="NM_001001512.3"/>
</dbReference>
<dbReference type="RefSeq" id="NP_001388138.1">
    <molecule id="Q5U2Y1-1"/>
    <property type="nucleotide sequence ID" value="NM_001401209.1"/>
</dbReference>
<dbReference type="RefSeq" id="XP_017453850.1">
    <property type="nucleotide sequence ID" value="XM_017598361.1"/>
</dbReference>
<dbReference type="RefSeq" id="XP_063127479.1">
    <molecule id="Q5U2Y1-1"/>
    <property type="nucleotide sequence ID" value="XM_063271409.1"/>
</dbReference>
<dbReference type="RefSeq" id="XP_063127485.1">
    <molecule id="Q5U2Y1-1"/>
    <property type="nucleotide sequence ID" value="XM_063271415.1"/>
</dbReference>
<dbReference type="SMR" id="Q5U2Y1"/>
<dbReference type="BioGRID" id="261874">
    <property type="interactions" value="2"/>
</dbReference>
<dbReference type="FunCoup" id="Q5U2Y1">
    <property type="interactions" value="3137"/>
</dbReference>
<dbReference type="IntAct" id="Q5U2Y1">
    <property type="interactions" value="1"/>
</dbReference>
<dbReference type="STRING" id="10116.ENSRNOP00000002020"/>
<dbReference type="iPTMnet" id="Q5U2Y1"/>
<dbReference type="PhosphoSitePlus" id="Q5U2Y1"/>
<dbReference type="jPOST" id="Q5U2Y1"/>
<dbReference type="PaxDb" id="10116-ENSRNOP00000002020"/>
<dbReference type="Ensembl" id="ENSRNOT00000002020.7">
    <molecule id="Q5U2Y1-1"/>
    <property type="protein sequence ID" value="ENSRNOP00000002020.3"/>
    <property type="gene ID" value="ENSRNOG00000001479.10"/>
</dbReference>
<dbReference type="Ensembl" id="ENSRNOT00000040356.6">
    <molecule id="Q5U2Y1-2"/>
    <property type="protein sequence ID" value="ENSRNOP00000040835.2"/>
    <property type="gene ID" value="ENSRNOG00000001479.10"/>
</dbReference>
<dbReference type="GeneID" id="353256"/>
<dbReference type="KEGG" id="rno:353256"/>
<dbReference type="UCSC" id="RGD:727961">
    <molecule id="Q5U2Y1-1"/>
    <property type="organism name" value="rat"/>
</dbReference>
<dbReference type="AGR" id="RGD:727961"/>
<dbReference type="CTD" id="2969"/>
<dbReference type="RGD" id="727961">
    <property type="gene designation" value="Gtf2i"/>
</dbReference>
<dbReference type="eggNOG" id="ENOG502QWD0">
    <property type="taxonomic scope" value="Eukaryota"/>
</dbReference>
<dbReference type="GeneTree" id="ENSGT00940000160349"/>
<dbReference type="HOGENOM" id="CLU_011773_0_0_1"/>
<dbReference type="InParanoid" id="Q5U2Y1"/>
<dbReference type="OrthoDB" id="10072451at2759"/>
<dbReference type="PhylomeDB" id="Q5U2Y1"/>
<dbReference type="PRO" id="PR:Q5U2Y1"/>
<dbReference type="Proteomes" id="UP000002494">
    <property type="component" value="Chromosome 12"/>
</dbReference>
<dbReference type="Bgee" id="ENSRNOG00000001479">
    <property type="expression patterns" value="Expressed in cerebellum and 19 other cell types or tissues"/>
</dbReference>
<dbReference type="ExpressionAtlas" id="Q5U2Y1">
    <property type="expression patterns" value="baseline and differential"/>
</dbReference>
<dbReference type="GO" id="GO:0005737">
    <property type="term" value="C:cytoplasm"/>
    <property type="evidence" value="ECO:0007669"/>
    <property type="project" value="UniProtKB-SubCell"/>
</dbReference>
<dbReference type="GO" id="GO:0005634">
    <property type="term" value="C:nucleus"/>
    <property type="evidence" value="ECO:0000266"/>
    <property type="project" value="RGD"/>
</dbReference>
<dbReference type="GO" id="GO:0003677">
    <property type="term" value="F:DNA binding"/>
    <property type="evidence" value="ECO:0007669"/>
    <property type="project" value="UniProtKB-KW"/>
</dbReference>
<dbReference type="GO" id="GO:0001228">
    <property type="term" value="F:DNA-binding transcription activator activity, RNA polymerase II-specific"/>
    <property type="evidence" value="ECO:0000266"/>
    <property type="project" value="RGD"/>
</dbReference>
<dbReference type="GO" id="GO:0003700">
    <property type="term" value="F:DNA-binding transcription factor activity"/>
    <property type="evidence" value="ECO:0000318"/>
    <property type="project" value="GO_Central"/>
</dbReference>
<dbReference type="GO" id="GO:0061629">
    <property type="term" value="F:RNA polymerase II-specific DNA-binding transcription factor binding"/>
    <property type="evidence" value="ECO:0000266"/>
    <property type="project" value="RGD"/>
</dbReference>
<dbReference type="GO" id="GO:0016525">
    <property type="term" value="P:negative regulation of angiogenesis"/>
    <property type="evidence" value="ECO:0000266"/>
    <property type="project" value="RGD"/>
</dbReference>
<dbReference type="GO" id="GO:0051481">
    <property type="term" value="P:negative regulation of cytosolic calcium ion concentration"/>
    <property type="evidence" value="ECO:0000315"/>
    <property type="project" value="RGD"/>
</dbReference>
<dbReference type="GO" id="GO:0045944">
    <property type="term" value="P:positive regulation of transcription by RNA polymerase II"/>
    <property type="evidence" value="ECO:0000266"/>
    <property type="project" value="RGD"/>
</dbReference>
<dbReference type="GO" id="GO:0006366">
    <property type="term" value="P:transcription by RNA polymerase II"/>
    <property type="evidence" value="ECO:0007669"/>
    <property type="project" value="InterPro"/>
</dbReference>
<dbReference type="FunFam" id="3.90.1460.10:FF:000002">
    <property type="entry name" value="General transcription factor II-I isoform 1"/>
    <property type="match status" value="1"/>
</dbReference>
<dbReference type="FunFam" id="3.90.1460.10:FF:000001">
    <property type="entry name" value="general transcription factor II-I isoform X1"/>
    <property type="match status" value="3"/>
</dbReference>
<dbReference type="FunFam" id="3.90.1460.10:FF:000003">
    <property type="entry name" value="general transcription factor II-I isoform X1"/>
    <property type="match status" value="1"/>
</dbReference>
<dbReference type="FunFam" id="3.90.1460.10:FF:000004">
    <property type="entry name" value="general transcription factor II-I isoform X1"/>
    <property type="match status" value="1"/>
</dbReference>
<dbReference type="Gene3D" id="3.90.1460.10">
    <property type="entry name" value="GTF2I-like"/>
    <property type="match status" value="6"/>
</dbReference>
<dbReference type="InterPro" id="IPR004212">
    <property type="entry name" value="GTF2I"/>
</dbReference>
<dbReference type="InterPro" id="IPR036647">
    <property type="entry name" value="GTF2I-like_rpt_sf"/>
</dbReference>
<dbReference type="InterPro" id="IPR016659">
    <property type="entry name" value="TF_II-I"/>
</dbReference>
<dbReference type="PANTHER" id="PTHR46304:SF2">
    <property type="entry name" value="GENERAL TRANSCRIPTION FACTOR II-I"/>
    <property type="match status" value="1"/>
</dbReference>
<dbReference type="PANTHER" id="PTHR46304">
    <property type="entry name" value="GENERAL TRANSCRIPTION FACTOR II-I REPEAT DOMAIN-CONTAINING PROTEIN 1"/>
    <property type="match status" value="1"/>
</dbReference>
<dbReference type="Pfam" id="PF02946">
    <property type="entry name" value="GTF2I"/>
    <property type="match status" value="6"/>
</dbReference>
<dbReference type="PIRSF" id="PIRSF016441">
    <property type="entry name" value="TF_II-I"/>
    <property type="match status" value="1"/>
</dbReference>
<dbReference type="SUPFAM" id="SSF117773">
    <property type="entry name" value="GTF2I-like repeat"/>
    <property type="match status" value="6"/>
</dbReference>
<dbReference type="PROSITE" id="PS51139">
    <property type="entry name" value="GTF2I"/>
    <property type="match status" value="6"/>
</dbReference>
<accession>Q5U2Y1</accession>
<accession>Q80SX4</accession>
<comment type="function">
    <text evidence="1">Interacts with the basal transcription machinery by coordinating the formation of a multiprotein complex at the C-FOS promoter, and linking specific signal responsive activator complexes. Promotes the formation of stable high-order complexes of SRF and PHOX1 and interacts cooperatively with PHOX1 to promote serum-inducible transcription of a reporter gene deriven by the C-FOS serum response element (SRE). Acts as a coregulator for USF1 by binding independently two promoter elements, a pyrimidine-rich initiator (Inr) and an upstream E-box (By similarity). Required for the formation of functional ARID3A DNA-binding complexes and for activation of immunoglobulin heavy-chain transcription upon B-lymphocyte activation (By similarity).</text>
</comment>
<comment type="subunit">
    <text evidence="1 8">Homodimer (Potential). Interacts with SRF and PHOX1. Binds a pyrimidine-rich initiator (Inr) and a recognition site (E-box) for upstream stimulatory factor 1 (USF1). Associates with the PH domain of Bruton's tyrosine kinase (BTK) (By similarity). May be a component of a BHC histone deacetylase complex that contains HDAC1, HDAC2, HMG20B/BRAF35, KDM1A, RCOR1/CoREST, PHF21A/BHC80, ZMYM2, ZNF217, ZMYM3, GSE1 and GTF2I. Interacts with BTK and ARID3A (By similarity). Interacts with isoform beta of PRKG1 (By similarity).</text>
</comment>
<comment type="subcellular location">
    <subcellularLocation>
        <location>Cytoplasm</location>
    </subcellularLocation>
    <subcellularLocation>
        <location>Nucleus</location>
    </subcellularLocation>
    <text evidence="1">Colocalizes with BTK in the cytoplasm.</text>
</comment>
<comment type="alternative products">
    <event type="alternative splicing"/>
    <isoform>
        <id>Q5U2Y1-1</id>
        <name>1</name>
        <sequence type="displayed"/>
    </isoform>
    <isoform>
        <id>Q5U2Y1-2</id>
        <name>2</name>
        <sequence type="described" ref="VSP_034698"/>
    </isoform>
</comment>
<comment type="PTM">
    <text evidence="1">Transiently phosphorylated on tyrosine residues by BTK in response to B-cell receptor stimulation. Phosphorylation on Tyr-248 and Tyr-379, and perhaps, on Tyr-484 contributes to BTK-mediated transcriptional activation (By similarity).</text>
</comment>
<comment type="PTM">
    <text evidence="1">Sumoylated.</text>
</comment>
<comment type="similarity">
    <text evidence="5">Belongs to the TFII-I family.</text>
</comment>
<reference key="1">
    <citation type="journal article" date="2003" name="Nat. Genet.">
        <title>Positional identification of Ncf1 as a gene that regulates arthritis severity in rats.</title>
        <authorList>
            <person name="Olofsson P."/>
            <person name="Holmberg J."/>
            <person name="Tordsson J."/>
            <person name="Lu S."/>
            <person name="Akerstrom B."/>
            <person name="Holmdahl R."/>
        </authorList>
    </citation>
    <scope>NUCLEOTIDE SEQUENCE [MRNA] (ISOFORM 1)</scope>
    <source>
        <strain>DA</strain>
        <strain>E3</strain>
    </source>
</reference>
<reference key="2">
    <citation type="journal article" date="2004" name="Genome Res.">
        <title>The status, quality, and expansion of the NIH full-length cDNA project: the Mammalian Gene Collection (MGC).</title>
        <authorList>
            <consortium name="The MGC Project Team"/>
        </authorList>
    </citation>
    <scope>NUCLEOTIDE SEQUENCE [LARGE SCALE MRNA] (ISOFORM 2)</scope>
    <source>
        <tissue>Lung</tissue>
    </source>
</reference>
<reference key="3">
    <citation type="journal article" date="2012" name="Nat. Commun.">
        <title>Quantitative maps of protein phosphorylation sites across 14 different rat organs and tissues.</title>
        <authorList>
            <person name="Lundby A."/>
            <person name="Secher A."/>
            <person name="Lage K."/>
            <person name="Nordsborg N.B."/>
            <person name="Dmytriyev A."/>
            <person name="Lundby C."/>
            <person name="Olsen J.V."/>
        </authorList>
    </citation>
    <scope>PHOSPHORYLATION [LARGE SCALE ANALYSIS] AT SER-228 (ISOFORM 2)</scope>
    <scope>IDENTIFICATION BY MASS SPECTROMETRY [LARGE SCALE ANALYSIS]</scope>
</reference>
<keyword id="KW-0007">Acetylation</keyword>
<keyword id="KW-0025">Alternative splicing</keyword>
<keyword id="KW-0963">Cytoplasm</keyword>
<keyword id="KW-0238">DNA-binding</keyword>
<keyword id="KW-1017">Isopeptide bond</keyword>
<keyword id="KW-0539">Nucleus</keyword>
<keyword id="KW-0597">Phosphoprotein</keyword>
<keyword id="KW-1185">Reference proteome</keyword>
<keyword id="KW-0677">Repeat</keyword>
<keyword id="KW-0804">Transcription</keyword>
<keyword id="KW-0805">Transcription regulation</keyword>
<keyword id="KW-0832">Ubl conjugation</keyword>